<accession>P06919</accession>
<name>VL3_OVPVD</name>
<keyword id="KW-0426">Late protein</keyword>
<keyword id="KW-1185">Reference proteome</keyword>
<protein>
    <recommendedName>
        <fullName>Probable protein L3</fullName>
    </recommendedName>
</protein>
<reference key="1">
    <citation type="journal article" date="1985" name="J. Virol.">
        <title>Molecular cloning and nucleotide sequence of deer papillomavirus.</title>
        <authorList>
            <person name="Groff D.E."/>
            <person name="Lancaster W.D."/>
        </authorList>
    </citation>
    <scope>NUCLEOTIDE SEQUENCE [GENOMIC DNA]</scope>
</reference>
<proteinExistence type="predicted"/>
<feature type="chain" id="PRO_0000133643" description="Probable protein L3">
    <location>
        <begin position="1"/>
        <end position="35"/>
    </location>
</feature>
<sequence length="35" mass="4239">MSLRMHYTIQRPTNMSSSRGYRDHRMHLSLTSKMQ</sequence>
<dbReference type="EMBL" id="M11910">
    <property type="protein sequence ID" value="AAA66847.1"/>
    <property type="molecule type" value="Genomic_DNA"/>
</dbReference>
<dbReference type="PIR" id="A22477">
    <property type="entry name" value="P3WLDP"/>
</dbReference>
<dbReference type="RefSeq" id="NP_041299.1">
    <property type="nucleotide sequence ID" value="NC_001523.1"/>
</dbReference>
<dbReference type="GeneID" id="1488985"/>
<dbReference type="KEGG" id="vg:1488985"/>
<dbReference type="Proteomes" id="UP000009185">
    <property type="component" value="Segment"/>
</dbReference>
<organism>
    <name type="scientific">Odocoileus virginianus papillomavirus 1</name>
    <name type="common">DPV</name>
    <name type="synonym">Deer papillomavirus</name>
    <dbReference type="NCBI Taxonomy" id="2772504"/>
    <lineage>
        <taxon>Viruses</taxon>
        <taxon>Monodnaviria</taxon>
        <taxon>Shotokuvirae</taxon>
        <taxon>Cossaviricota</taxon>
        <taxon>Papovaviricetes</taxon>
        <taxon>Zurhausenvirales</taxon>
        <taxon>Papillomaviridae</taxon>
        <taxon>Firstpapillomavirinae</taxon>
        <taxon>Deltapapillomavirus</taxon>
        <taxon>Deer papillomavirus</taxon>
    </lineage>
</organism>
<organismHost>
    <name type="scientific">Odocoileus virginianus</name>
    <name type="common">White-tailed deer</name>
    <dbReference type="NCBI Taxonomy" id="9874"/>
</organismHost>